<feature type="chain" id="PRO_0000051051" description="Katanin p80 WD40 repeat-containing subunit B1">
    <location>
        <begin position="1"/>
        <end position="694"/>
    </location>
</feature>
<feature type="repeat" description="WD 1">
    <location>
        <begin position="18"/>
        <end position="58"/>
    </location>
</feature>
<feature type="repeat" description="WD 2">
    <location>
        <begin position="61"/>
        <end position="100"/>
    </location>
</feature>
<feature type="repeat" description="WD 3">
    <location>
        <begin position="103"/>
        <end position="142"/>
    </location>
</feature>
<feature type="repeat" description="WD 4">
    <location>
        <begin position="145"/>
        <end position="186"/>
    </location>
</feature>
<feature type="repeat" description="WD 5">
    <location>
        <begin position="188"/>
        <end position="226"/>
    </location>
</feature>
<feature type="repeat" description="WD 6">
    <location>
        <begin position="229"/>
        <end position="269"/>
    </location>
</feature>
<feature type="region of interest" description="Disordered" evidence="3">
    <location>
        <begin position="319"/>
        <end position="410"/>
    </location>
</feature>
<feature type="region of interest" description="Disordered" evidence="3">
    <location>
        <begin position="470"/>
        <end position="492"/>
    </location>
</feature>
<feature type="compositionally biased region" description="Polar residues" evidence="3">
    <location>
        <begin position="327"/>
        <end position="349"/>
    </location>
</feature>
<feature type="compositionally biased region" description="Basic and acidic residues" evidence="3">
    <location>
        <begin position="350"/>
        <end position="378"/>
    </location>
</feature>
<feature type="compositionally biased region" description="Low complexity" evidence="3">
    <location>
        <begin position="470"/>
        <end position="481"/>
    </location>
</feature>
<feature type="compositionally biased region" description="Polar residues" evidence="3">
    <location>
        <begin position="482"/>
        <end position="492"/>
    </location>
</feature>
<organism>
    <name type="scientific">Danio rerio</name>
    <name type="common">Zebrafish</name>
    <name type="synonym">Brachydanio rerio</name>
    <dbReference type="NCBI Taxonomy" id="7955"/>
    <lineage>
        <taxon>Eukaryota</taxon>
        <taxon>Metazoa</taxon>
        <taxon>Chordata</taxon>
        <taxon>Craniata</taxon>
        <taxon>Vertebrata</taxon>
        <taxon>Euteleostomi</taxon>
        <taxon>Actinopterygii</taxon>
        <taxon>Neopterygii</taxon>
        <taxon>Teleostei</taxon>
        <taxon>Ostariophysi</taxon>
        <taxon>Cypriniformes</taxon>
        <taxon>Danionidae</taxon>
        <taxon>Danioninae</taxon>
        <taxon>Danio</taxon>
    </lineage>
</organism>
<gene>
    <name type="primary">katnb1</name>
    <name type="ORF">zgc:56071</name>
</gene>
<comment type="function">
    <text evidence="2">Participates in a complex which severs microtubules in an ATP-dependent manner. May act to target the enzymatic subunit of this complex to sites of action such as the centrosome. Microtubule severing may promote rapid reorganization of cellular microtubule arrays and the release of microtubules from the centrosome following nucleation.</text>
</comment>
<comment type="subunit">
    <text evidence="2">Interacts with katna1. This interaction enhances the microtubule binding and severing activity of katna1 and also targets this activity to the centrosome.</text>
</comment>
<comment type="subcellular location">
    <subcellularLocation>
        <location evidence="2">Cytoplasm</location>
    </subcellularLocation>
    <subcellularLocation>
        <location evidence="2">Cytoplasm</location>
        <location evidence="2">Cytoskeleton</location>
        <location evidence="2">Microtubule organizing center</location>
        <location evidence="2">Centrosome</location>
    </subcellularLocation>
    <subcellularLocation>
        <location evidence="2">Cytoplasm</location>
        <location evidence="2">Cytoskeleton</location>
        <location evidence="2">Spindle pole</location>
    </subcellularLocation>
    <subcellularLocation>
        <location evidence="2">Cytoplasm</location>
        <location evidence="2">Cytoskeleton</location>
    </subcellularLocation>
    <subcellularLocation>
        <location evidence="1">Cytoplasm</location>
        <location evidence="1">Cytoskeleton</location>
        <location evidence="1">Spindle</location>
    </subcellularLocation>
    <text evidence="2">Predominantly cytoplasmic. Localized to the interphase centrosome and mitotic spindle poles.</text>
</comment>
<comment type="disruption phenotype">
    <text evidence="4 5">Results in a significant reduction in midbrain size. A wide spectrum of defects in gastrulation and formation of anterior structures are noticed, ranging from milder microcephaly to more severe anencephaly and early embryonic death.</text>
</comment>
<comment type="similarity">
    <text evidence="2">Belongs to the WD repeat KATNB1 family.</text>
</comment>
<reference key="1">
    <citation type="submission" date="2004-02" db="EMBL/GenBank/DDBJ databases">
        <authorList>
            <consortium name="NIH - Zebrafish Gene Collection (ZGC) project"/>
        </authorList>
    </citation>
    <scope>NUCLEOTIDE SEQUENCE [LARGE SCALE MRNA]</scope>
</reference>
<reference key="2">
    <citation type="journal article" date="2014" name="Neuron">
        <title>Mutations in KATNB1 cause complex cerebral malformations by disrupting asymmetrically dividing neural progenitors.</title>
        <authorList>
            <person name="Mishra-Gorur K."/>
            <person name="Caglayan A.O."/>
            <person name="Schaffer A.E."/>
            <person name="Chabu C."/>
            <person name="Henegariu O."/>
            <person name="Vonhoff F."/>
            <person name="Akguemues G.T."/>
            <person name="Nishimura S."/>
            <person name="Han W."/>
            <person name="Tu S."/>
            <person name="Baran B."/>
            <person name="Guemues H."/>
            <person name="Dilber C."/>
            <person name="Zaki M.S."/>
            <person name="Hossni H.A."/>
            <person name="Riviere J.B."/>
            <person name="Kayserili H."/>
            <person name="Spencer E.G."/>
            <person name="Rosti R.O."/>
            <person name="Schroth J."/>
            <person name="Per H."/>
            <person name="Caglar C."/>
            <person name="Caglar C."/>
            <person name="Doelen D."/>
            <person name="Baranoski J.F."/>
            <person name="Kumandas S."/>
            <person name="Minja F.J."/>
            <person name="Erson-Omay E.Z."/>
            <person name="Mane S.M."/>
            <person name="Lifton R.P."/>
            <person name="Xu T."/>
            <person name="Keshishian H."/>
            <person name="Dobyns W.B."/>
            <person name="Chi N.C."/>
            <person name="Sestan N."/>
            <person name="Louvi A."/>
            <person name="Bilguevar K."/>
            <person name="Yasuno K."/>
            <person name="Gleeson J.G."/>
            <person name="Guenel M."/>
        </authorList>
    </citation>
    <scope>DISRUPTION PHENOTYPE</scope>
</reference>
<reference key="3">
    <citation type="journal article" date="2014" name="Neuron">
        <title>Katanin p80 regulates human cortical development by limiting centriole and cilia number.</title>
        <authorList>
            <person name="Hu W.F."/>
            <person name="Pomp O."/>
            <person name="Ben-Omran T."/>
            <person name="Kodani A."/>
            <person name="Henke K."/>
            <person name="Mochida G.H."/>
            <person name="Yu T.W."/>
            <person name="Woodworth M.B."/>
            <person name="Bonnard C."/>
            <person name="Raj G.S."/>
            <person name="Tan T.T."/>
            <person name="Hamamy H."/>
            <person name="Masri A."/>
            <person name="Shboul M."/>
            <person name="Al Saffar M."/>
            <person name="Partlow J.N."/>
            <person name="Al-Dosari M."/>
            <person name="Alazami A."/>
            <person name="Alowain M."/>
            <person name="Alkuraya F.S."/>
            <person name="Reiter J.F."/>
            <person name="Harris M.P."/>
            <person name="Reversade B."/>
            <person name="Walsh C.A."/>
        </authorList>
    </citation>
    <scope>DISRUPTION PHENOTYPE</scope>
</reference>
<dbReference type="EMBL" id="BC047819">
    <property type="protein sequence ID" value="AAH47819.1"/>
    <property type="molecule type" value="mRNA"/>
</dbReference>
<dbReference type="RefSeq" id="NP_998183.1">
    <property type="nucleotide sequence ID" value="NM_213018.1"/>
</dbReference>
<dbReference type="RefSeq" id="XP_005166561.1">
    <property type="nucleotide sequence ID" value="XM_005166504.5"/>
</dbReference>
<dbReference type="RefSeq" id="XP_005166562.1">
    <property type="nucleotide sequence ID" value="XM_005166505.5"/>
</dbReference>
<dbReference type="SMR" id="Q7ZUV2"/>
<dbReference type="FunCoup" id="Q7ZUV2">
    <property type="interactions" value="939"/>
</dbReference>
<dbReference type="STRING" id="7955.ENSDARP00000024623"/>
<dbReference type="PaxDb" id="7955-ENSDARP00000024623"/>
<dbReference type="Ensembl" id="ENSDART00000014632">
    <property type="protein sequence ID" value="ENSDARP00000024623"/>
    <property type="gene ID" value="ENSDARG00000005456"/>
</dbReference>
<dbReference type="GeneID" id="406291"/>
<dbReference type="KEGG" id="dre:406291"/>
<dbReference type="AGR" id="ZFIN:ZDB-GENE-040426-1954"/>
<dbReference type="CTD" id="10300"/>
<dbReference type="ZFIN" id="ZDB-GENE-040426-1954">
    <property type="gene designation" value="katnb1"/>
</dbReference>
<dbReference type="eggNOG" id="KOG0267">
    <property type="taxonomic scope" value="Eukaryota"/>
</dbReference>
<dbReference type="InParanoid" id="Q7ZUV2"/>
<dbReference type="OrthoDB" id="10251605at2759"/>
<dbReference type="PhylomeDB" id="Q7ZUV2"/>
<dbReference type="TreeFam" id="TF332359"/>
<dbReference type="PRO" id="PR:Q7ZUV2"/>
<dbReference type="Proteomes" id="UP000000437">
    <property type="component" value="Alternate scaffold 7"/>
</dbReference>
<dbReference type="Proteomes" id="UP000000437">
    <property type="component" value="Chromosome 7"/>
</dbReference>
<dbReference type="Bgee" id="ENSDARG00000005456">
    <property type="expression patterns" value="Expressed in testis and 21 other cell types or tissues"/>
</dbReference>
<dbReference type="ExpressionAtlas" id="Q7ZUV2">
    <property type="expression patterns" value="baseline"/>
</dbReference>
<dbReference type="GO" id="GO:0005813">
    <property type="term" value="C:centrosome"/>
    <property type="evidence" value="ECO:0007669"/>
    <property type="project" value="UniProtKB-SubCell"/>
</dbReference>
<dbReference type="GO" id="GO:0005737">
    <property type="term" value="C:cytoplasm"/>
    <property type="evidence" value="ECO:0000250"/>
    <property type="project" value="UniProtKB"/>
</dbReference>
<dbReference type="GO" id="GO:0008352">
    <property type="term" value="C:katanin complex"/>
    <property type="evidence" value="ECO:0000318"/>
    <property type="project" value="GO_Central"/>
</dbReference>
<dbReference type="GO" id="GO:0005874">
    <property type="term" value="C:microtubule"/>
    <property type="evidence" value="ECO:0007669"/>
    <property type="project" value="UniProtKB-KW"/>
</dbReference>
<dbReference type="GO" id="GO:0005819">
    <property type="term" value="C:spindle"/>
    <property type="evidence" value="ECO:0000250"/>
    <property type="project" value="UniProtKB"/>
</dbReference>
<dbReference type="GO" id="GO:0000922">
    <property type="term" value="C:spindle pole"/>
    <property type="evidence" value="ECO:0000250"/>
    <property type="project" value="UniProtKB"/>
</dbReference>
<dbReference type="GO" id="GO:0008017">
    <property type="term" value="F:microtubule binding"/>
    <property type="evidence" value="ECO:0007669"/>
    <property type="project" value="UniProtKB-UniRule"/>
</dbReference>
<dbReference type="GO" id="GO:0007420">
    <property type="term" value="P:brain development"/>
    <property type="evidence" value="ECO:0000315"/>
    <property type="project" value="ZFIN"/>
</dbReference>
<dbReference type="GO" id="GO:0051301">
    <property type="term" value="P:cell division"/>
    <property type="evidence" value="ECO:0007669"/>
    <property type="project" value="UniProtKB-KW"/>
</dbReference>
<dbReference type="GO" id="GO:0007019">
    <property type="term" value="P:microtubule depolymerization"/>
    <property type="evidence" value="ECO:0000318"/>
    <property type="project" value="GO_Central"/>
</dbReference>
<dbReference type="GO" id="GO:0051013">
    <property type="term" value="P:microtubule severing"/>
    <property type="evidence" value="ECO:0007669"/>
    <property type="project" value="UniProtKB-UniRule"/>
</dbReference>
<dbReference type="GO" id="GO:0030901">
    <property type="term" value="P:midbrain development"/>
    <property type="evidence" value="ECO:0000315"/>
    <property type="project" value="ZFIN"/>
</dbReference>
<dbReference type="CDD" id="cd00200">
    <property type="entry name" value="WD40"/>
    <property type="match status" value="1"/>
</dbReference>
<dbReference type="FunFam" id="2.130.10.10:FF:000846">
    <property type="entry name" value="Katanin p80 WD40 repeat-containing subunit B1 homolog"/>
    <property type="match status" value="1"/>
</dbReference>
<dbReference type="Gene3D" id="2.130.10.10">
    <property type="entry name" value="YVTN repeat-like/Quinoprotein amine dehydrogenase"/>
    <property type="match status" value="2"/>
</dbReference>
<dbReference type="HAMAP" id="MF_03022">
    <property type="entry name" value="Katanin_p80_B1"/>
    <property type="match status" value="1"/>
</dbReference>
<dbReference type="InterPro" id="IPR020472">
    <property type="entry name" value="G-protein_beta_WD-40_rep"/>
</dbReference>
<dbReference type="InterPro" id="IPR028021">
    <property type="entry name" value="Katanin_C-terminal"/>
</dbReference>
<dbReference type="InterPro" id="IPR026962">
    <property type="entry name" value="KTNB1"/>
</dbReference>
<dbReference type="InterPro" id="IPR015943">
    <property type="entry name" value="WD40/YVTN_repeat-like_dom_sf"/>
</dbReference>
<dbReference type="InterPro" id="IPR019775">
    <property type="entry name" value="WD40_repeat_CS"/>
</dbReference>
<dbReference type="InterPro" id="IPR036322">
    <property type="entry name" value="WD40_repeat_dom_sf"/>
</dbReference>
<dbReference type="InterPro" id="IPR001680">
    <property type="entry name" value="WD40_rpt"/>
</dbReference>
<dbReference type="PANTHER" id="PTHR19845">
    <property type="entry name" value="KATANIN P80 SUBUNIT"/>
    <property type="match status" value="1"/>
</dbReference>
<dbReference type="PANTHER" id="PTHR19845:SF0">
    <property type="entry name" value="KATANIN P80 WD40 REPEAT-CONTAINING SUBUNIT B1"/>
    <property type="match status" value="1"/>
</dbReference>
<dbReference type="Pfam" id="PF13925">
    <property type="entry name" value="Katanin_con80"/>
    <property type="match status" value="1"/>
</dbReference>
<dbReference type="Pfam" id="PF00400">
    <property type="entry name" value="WD40"/>
    <property type="match status" value="6"/>
</dbReference>
<dbReference type="PRINTS" id="PR00320">
    <property type="entry name" value="GPROTEINBRPT"/>
</dbReference>
<dbReference type="SMART" id="SM00320">
    <property type="entry name" value="WD40"/>
    <property type="match status" value="6"/>
</dbReference>
<dbReference type="SUPFAM" id="SSF50978">
    <property type="entry name" value="WD40 repeat-like"/>
    <property type="match status" value="1"/>
</dbReference>
<dbReference type="PROSITE" id="PS00678">
    <property type="entry name" value="WD_REPEATS_1"/>
    <property type="match status" value="3"/>
</dbReference>
<dbReference type="PROSITE" id="PS50082">
    <property type="entry name" value="WD_REPEATS_2"/>
    <property type="match status" value="5"/>
</dbReference>
<dbReference type="PROSITE" id="PS50294">
    <property type="entry name" value="WD_REPEATS_REGION"/>
    <property type="match status" value="1"/>
</dbReference>
<accession>Q7ZUV2</accession>
<sequence>MALTNTTITSWKLQEIVAHSSNVSSLVLGKSSGRLLATGGEDCRVNIWAVSKPNCIMSLTGHTSAVGCIQFNSSEERVVAGSLSGSLRLWDLEAAKILRTLMGHKASISSLDFHPMGEYLASGSVDSNIKLWDVRRKGCVFRYKGHTQAVRCLAFSPDGKWLASASDDSTVKLWDLIAGKMITEFTSHTSAVNVVQFHPNEYLLASGSADRTVKLWDLEKFNMIGSSEGETGVVRSVLFNPDGSCLYSGSENTLRVYGWEPDRCFDVVHVGWGKVSDLAISNNQMIAVSYSHTNVSWYVVDLNRVKKSGSVIQGLIQDKPIPAPSSALGTTLRRNYERPTTSCTGQEMKQSSEADRRSPEGERRSPSSEDEKEDKESSAEITNPEDYKEIFQPRSVISRTPPKTTEPFPAPLEHSFSESVLEKPGPVVKIVTPVIDRAGQLKGPITSSTPVQRVEPTVIAAAPRPVAVVTTSASSPSRPVVNTTKPKPSTGIILSTRNEPIGLNAGDFLSHARNAKASAMGDEEALAQIRKGHDTMCVMLSSRSKNLDSVRSVWASGDVKTSLDSAVSMNDLSIVVDVLNIINLKPSLWKLDLCTSILPQIEELLQSRYESYVQTGCMSLKLILKRFWPLISDTLNAPPSVGVDITREERHQKCKACYKQLKNLSNVVKNRAEQVGRHGSTFRELQLLMAPLDY</sequence>
<keyword id="KW-0131">Cell cycle</keyword>
<keyword id="KW-0132">Cell division</keyword>
<keyword id="KW-0963">Cytoplasm</keyword>
<keyword id="KW-0206">Cytoskeleton</keyword>
<keyword id="KW-0493">Microtubule</keyword>
<keyword id="KW-0498">Mitosis</keyword>
<keyword id="KW-1185">Reference proteome</keyword>
<keyword id="KW-0677">Repeat</keyword>
<keyword id="KW-0853">WD repeat</keyword>
<proteinExistence type="evidence at transcript level"/>
<evidence type="ECO:0000250" key="1">
    <source>
        <dbReference type="UniProtKB" id="Q9BVA0"/>
    </source>
</evidence>
<evidence type="ECO:0000255" key="2">
    <source>
        <dbReference type="HAMAP-Rule" id="MF_03022"/>
    </source>
</evidence>
<evidence type="ECO:0000256" key="3">
    <source>
        <dbReference type="SAM" id="MobiDB-lite"/>
    </source>
</evidence>
<evidence type="ECO:0000269" key="4">
    <source>
    </source>
</evidence>
<evidence type="ECO:0000269" key="5">
    <source>
    </source>
</evidence>
<protein>
    <recommendedName>
        <fullName evidence="2">Katanin p80 WD40 repeat-containing subunit B1</fullName>
        <shortName evidence="2">Katanin p80 subunit B1</shortName>
    </recommendedName>
    <alternativeName>
        <fullName evidence="2">p80 katanin</fullName>
    </alternativeName>
</protein>
<name>KTNB1_DANRE</name>